<reference key="1">
    <citation type="journal article" date="1996" name="Nucleic Acids Res.">
        <title>Sequence analysis of 56 kb from the genome of the bacterium Mycoplasma pneumoniae comprising the dnaA region, the atp operon and a cluster of ribosomal protein genes.</title>
        <authorList>
            <person name="Hilbert H."/>
            <person name="Himmelreich R."/>
            <person name="Plagens H."/>
            <person name="Herrmann R."/>
        </authorList>
    </citation>
    <scope>NUCLEOTIDE SEQUENCE [GENOMIC DNA]</scope>
    <source>
        <strain>ATCC 29342 / M129 / Subtype 1</strain>
    </source>
</reference>
<reference key="2">
    <citation type="journal article" date="1996" name="Nucleic Acids Res.">
        <title>Complete sequence analysis of the genome of the bacterium Mycoplasma pneumoniae.</title>
        <authorList>
            <person name="Himmelreich R."/>
            <person name="Hilbert H."/>
            <person name="Plagens H."/>
            <person name="Pirkl E."/>
            <person name="Li B.-C."/>
            <person name="Herrmann R."/>
        </authorList>
    </citation>
    <scope>NUCLEOTIDE SEQUENCE [LARGE SCALE GENOMIC DNA]</scope>
    <source>
        <strain>ATCC 29342 / M129 / Subtype 1</strain>
    </source>
</reference>
<sequence length="219" mass="24090">MTDQNQKANQGNGLQTTNLQAHAQRKHNLRPSSEGIKKAVSKKEGGGHNRNNQNRRFQKPAFKSEFEERIVKLKRISKTTKGGRNMRFSVLVVVGNRKGKIGYGIAKALEVPNAIKKAIKAAHNSLHTIEIHKGSIYHEVIGRSGASRVLLKPAPQGTGIIAGGAIRAIIELAGYSDIYTKNLGRNTPINMIHATMDGILKQLSPRRVAILRNKNLNEL</sequence>
<gene>
    <name evidence="1" type="primary">rpsE</name>
    <name type="ordered locus">MPN_182</name>
    <name type="ORF">MP649</name>
</gene>
<protein>
    <recommendedName>
        <fullName evidence="1">Small ribosomal subunit protein uS5</fullName>
    </recommendedName>
    <alternativeName>
        <fullName evidence="3">30S ribosomal protein S5</fullName>
    </alternativeName>
</protein>
<keyword id="KW-0002">3D-structure</keyword>
<keyword id="KW-1185">Reference proteome</keyword>
<keyword id="KW-0687">Ribonucleoprotein</keyword>
<keyword id="KW-0689">Ribosomal protein</keyword>
<keyword id="KW-0694">RNA-binding</keyword>
<keyword id="KW-0699">rRNA-binding</keyword>
<organism>
    <name type="scientific">Mycoplasma pneumoniae (strain ATCC 29342 / M129 / Subtype 1)</name>
    <name type="common">Mycoplasmoides pneumoniae</name>
    <dbReference type="NCBI Taxonomy" id="272634"/>
    <lineage>
        <taxon>Bacteria</taxon>
        <taxon>Bacillati</taxon>
        <taxon>Mycoplasmatota</taxon>
        <taxon>Mycoplasmoidales</taxon>
        <taxon>Mycoplasmoidaceae</taxon>
        <taxon>Mycoplasmoides</taxon>
    </lineage>
</organism>
<proteinExistence type="evidence at protein level"/>
<accession>Q50301</accession>
<evidence type="ECO:0000255" key="1">
    <source>
        <dbReference type="HAMAP-Rule" id="MF_01307"/>
    </source>
</evidence>
<evidence type="ECO:0000256" key="2">
    <source>
        <dbReference type="SAM" id="MobiDB-lite"/>
    </source>
</evidence>
<evidence type="ECO:0000305" key="3"/>
<evidence type="ECO:0007829" key="4">
    <source>
        <dbReference type="PDB" id="8P6P"/>
    </source>
</evidence>
<feature type="chain" id="PRO_0000131554" description="Small ribosomal subunit protein uS5">
    <location>
        <begin position="1"/>
        <end position="219"/>
    </location>
</feature>
<feature type="domain" description="S5 DRBM" evidence="1">
    <location>
        <begin position="66"/>
        <end position="129"/>
    </location>
</feature>
<feature type="region of interest" description="Disordered" evidence="2">
    <location>
        <begin position="1"/>
        <end position="61"/>
    </location>
</feature>
<feature type="compositionally biased region" description="Polar residues" evidence="2">
    <location>
        <begin position="1"/>
        <end position="21"/>
    </location>
</feature>
<feature type="compositionally biased region" description="Basic and acidic residues" evidence="2">
    <location>
        <begin position="35"/>
        <end position="47"/>
    </location>
</feature>
<feature type="strand" evidence="4">
    <location>
        <begin position="67"/>
        <end position="79"/>
    </location>
</feature>
<feature type="strand" evidence="4">
    <location>
        <begin position="81"/>
        <end position="95"/>
    </location>
</feature>
<feature type="strand" evidence="4">
    <location>
        <begin position="97"/>
        <end position="110"/>
    </location>
</feature>
<feature type="helix" evidence="4">
    <location>
        <begin position="111"/>
        <end position="124"/>
    </location>
</feature>
<feature type="strand" evidence="4">
    <location>
        <begin position="140"/>
        <end position="144"/>
    </location>
</feature>
<feature type="strand" evidence="4">
    <location>
        <begin position="147"/>
        <end position="153"/>
    </location>
</feature>
<feature type="helix" evidence="4">
    <location>
        <begin position="165"/>
        <end position="173"/>
    </location>
</feature>
<feature type="strand" evidence="4">
    <location>
        <begin position="176"/>
        <end position="182"/>
    </location>
</feature>
<feature type="helix" evidence="4">
    <location>
        <begin position="188"/>
        <end position="200"/>
    </location>
</feature>
<feature type="helix" evidence="4">
    <location>
        <begin position="207"/>
        <end position="212"/>
    </location>
</feature>
<dbReference type="EMBL" id="U34795">
    <property type="protein sequence ID" value="AAC43699.1"/>
    <property type="molecule type" value="Genomic_DNA"/>
</dbReference>
<dbReference type="EMBL" id="U00089">
    <property type="protein sequence ID" value="AAB96297.1"/>
    <property type="molecule type" value="Genomic_DNA"/>
</dbReference>
<dbReference type="PIR" id="S62804">
    <property type="entry name" value="S62804"/>
</dbReference>
<dbReference type="RefSeq" id="NP_109870.1">
    <property type="nucleotide sequence ID" value="NC_000912.1"/>
</dbReference>
<dbReference type="RefSeq" id="WP_010874539.1">
    <property type="nucleotide sequence ID" value="NZ_OU342337.1"/>
</dbReference>
<dbReference type="PDB" id="7OOC">
    <property type="method" value="EM"/>
    <property type="resolution" value="3.70 A"/>
    <property type="chains" value="D=1-219"/>
</dbReference>
<dbReference type="PDB" id="7P6Z">
    <property type="method" value="EM"/>
    <property type="resolution" value="3.50 A"/>
    <property type="chains" value="D=1-219"/>
</dbReference>
<dbReference type="PDB" id="7PAH">
    <property type="method" value="EM"/>
    <property type="resolution" value="9.50 A"/>
    <property type="chains" value="D=1-219"/>
</dbReference>
<dbReference type="PDB" id="7PAI">
    <property type="method" value="EM"/>
    <property type="resolution" value="6.70 A"/>
    <property type="chains" value="D=1-219"/>
</dbReference>
<dbReference type="PDB" id="7PAJ">
    <property type="method" value="EM"/>
    <property type="resolution" value="7.30 A"/>
    <property type="chains" value="D=1-219"/>
</dbReference>
<dbReference type="PDB" id="7PAK">
    <property type="method" value="EM"/>
    <property type="resolution" value="5.30 A"/>
    <property type="chains" value="D=1-219"/>
</dbReference>
<dbReference type="PDB" id="7PAL">
    <property type="method" value="EM"/>
    <property type="resolution" value="4.70 A"/>
    <property type="chains" value="D=1-219"/>
</dbReference>
<dbReference type="PDB" id="7PAM">
    <property type="method" value="EM"/>
    <property type="resolution" value="6.80 A"/>
    <property type="chains" value="D=1-219"/>
</dbReference>
<dbReference type="PDB" id="7PAN">
    <property type="method" value="EM"/>
    <property type="resolution" value="9.70 A"/>
    <property type="chains" value="D=1-219"/>
</dbReference>
<dbReference type="PDB" id="7PAO">
    <property type="method" value="EM"/>
    <property type="resolution" value="7.00 A"/>
    <property type="chains" value="D=1-219"/>
</dbReference>
<dbReference type="PDB" id="7PAQ">
    <property type="method" value="EM"/>
    <property type="resolution" value="8.90 A"/>
    <property type="chains" value="D=1-219"/>
</dbReference>
<dbReference type="PDB" id="7PAR">
    <property type="method" value="EM"/>
    <property type="resolution" value="8.20 A"/>
    <property type="chains" value="D=1-219"/>
</dbReference>
<dbReference type="PDB" id="7PAS">
    <property type="method" value="EM"/>
    <property type="resolution" value="16.00 A"/>
    <property type="chains" value="D=1-219"/>
</dbReference>
<dbReference type="PDB" id="7PH9">
    <property type="method" value="EM"/>
    <property type="resolution" value="8.70 A"/>
    <property type="chains" value="D=1-219"/>
</dbReference>
<dbReference type="PDB" id="7PHA">
    <property type="method" value="EM"/>
    <property type="resolution" value="8.50 A"/>
    <property type="chains" value="D=1-219"/>
</dbReference>
<dbReference type="PDB" id="7PHB">
    <property type="method" value="EM"/>
    <property type="resolution" value="4.90 A"/>
    <property type="chains" value="D=1-219"/>
</dbReference>
<dbReference type="PDB" id="7PHC">
    <property type="method" value="EM"/>
    <property type="resolution" value="9.90 A"/>
    <property type="chains" value="D=1-219"/>
</dbReference>
<dbReference type="PDB" id="7PI8">
    <property type="method" value="EM"/>
    <property type="resolution" value="8.90 A"/>
    <property type="chains" value="D=1-219"/>
</dbReference>
<dbReference type="PDB" id="7PI9">
    <property type="method" value="EM"/>
    <property type="resolution" value="6.30 A"/>
    <property type="chains" value="D=1-219"/>
</dbReference>
<dbReference type="PDB" id="7PIA">
    <property type="method" value="EM"/>
    <property type="resolution" value="13.60 A"/>
    <property type="chains" value="D=1-219"/>
</dbReference>
<dbReference type="PDB" id="7PIB">
    <property type="method" value="EM"/>
    <property type="resolution" value="4.70 A"/>
    <property type="chains" value="D=1-219"/>
</dbReference>
<dbReference type="PDB" id="7PIC">
    <property type="method" value="EM"/>
    <property type="resolution" value="9.10 A"/>
    <property type="chains" value="D=1-219"/>
</dbReference>
<dbReference type="PDB" id="7PIO">
    <property type="method" value="EM"/>
    <property type="resolution" value="9.50 A"/>
    <property type="chains" value="D=1-219"/>
</dbReference>
<dbReference type="PDB" id="7PIP">
    <property type="method" value="EM"/>
    <property type="resolution" value="9.30 A"/>
    <property type="chains" value="D=1-219"/>
</dbReference>
<dbReference type="PDB" id="7PIQ">
    <property type="method" value="EM"/>
    <property type="resolution" value="9.70 A"/>
    <property type="chains" value="D=1-219"/>
</dbReference>
<dbReference type="PDB" id="7PIR">
    <property type="method" value="EM"/>
    <property type="resolution" value="12.10 A"/>
    <property type="chains" value="D=1-219"/>
</dbReference>
<dbReference type="PDB" id="7PIS">
    <property type="method" value="EM"/>
    <property type="resolution" value="15.00 A"/>
    <property type="chains" value="D=1-219"/>
</dbReference>
<dbReference type="PDB" id="7PIT">
    <property type="method" value="EM"/>
    <property type="resolution" value="5.70 A"/>
    <property type="chains" value="D=1-219"/>
</dbReference>
<dbReference type="PDB" id="8P6P">
    <property type="method" value="EM"/>
    <property type="resolution" value="3.20 A"/>
    <property type="chains" value="D=1-219"/>
</dbReference>
<dbReference type="PDB" id="8P7X">
    <property type="method" value="EM"/>
    <property type="resolution" value="3.03 A"/>
    <property type="chains" value="D=1-219"/>
</dbReference>
<dbReference type="PDB" id="8P7Y">
    <property type="method" value="EM"/>
    <property type="resolution" value="3.70 A"/>
    <property type="chains" value="D=1-219"/>
</dbReference>
<dbReference type="PDB" id="8P8V">
    <property type="method" value="EM"/>
    <property type="resolution" value="8.70 A"/>
    <property type="chains" value="D=1-219"/>
</dbReference>
<dbReference type="PDB" id="8P8W">
    <property type="method" value="EM"/>
    <property type="resolution" value="8.70 A"/>
    <property type="chains" value="D=1-219"/>
</dbReference>
<dbReference type="PDBsum" id="7OOC"/>
<dbReference type="PDBsum" id="7P6Z"/>
<dbReference type="PDBsum" id="7PAH"/>
<dbReference type="PDBsum" id="7PAI"/>
<dbReference type="PDBsum" id="7PAJ"/>
<dbReference type="PDBsum" id="7PAK"/>
<dbReference type="PDBsum" id="7PAL"/>
<dbReference type="PDBsum" id="7PAM"/>
<dbReference type="PDBsum" id="7PAN"/>
<dbReference type="PDBsum" id="7PAO"/>
<dbReference type="PDBsum" id="7PAQ"/>
<dbReference type="PDBsum" id="7PAR"/>
<dbReference type="PDBsum" id="7PAS"/>
<dbReference type="PDBsum" id="7PH9"/>
<dbReference type="PDBsum" id="7PHA"/>
<dbReference type="PDBsum" id="7PHB"/>
<dbReference type="PDBsum" id="7PHC"/>
<dbReference type="PDBsum" id="7PI8"/>
<dbReference type="PDBsum" id="7PI9"/>
<dbReference type="PDBsum" id="7PIA"/>
<dbReference type="PDBsum" id="7PIB"/>
<dbReference type="PDBsum" id="7PIC"/>
<dbReference type="PDBsum" id="7PIO"/>
<dbReference type="PDBsum" id="7PIP"/>
<dbReference type="PDBsum" id="7PIQ"/>
<dbReference type="PDBsum" id="7PIR"/>
<dbReference type="PDBsum" id="7PIS"/>
<dbReference type="PDBsum" id="7PIT"/>
<dbReference type="PDBsum" id="8P6P"/>
<dbReference type="PDBsum" id="8P7X"/>
<dbReference type="PDBsum" id="8P7Y"/>
<dbReference type="PDBsum" id="8P8V"/>
<dbReference type="PDBsum" id="8P8W"/>
<dbReference type="EMDB" id="EMD-13234"/>
<dbReference type="EMDB" id="EMD-13272"/>
<dbReference type="EMDB" id="EMD-13273"/>
<dbReference type="EMDB" id="EMD-13274"/>
<dbReference type="EMDB" id="EMD-13275"/>
<dbReference type="EMDB" id="EMD-13276"/>
<dbReference type="EMDB" id="EMD-13277"/>
<dbReference type="EMDB" id="EMD-13278"/>
<dbReference type="EMDB" id="EMD-13279"/>
<dbReference type="EMDB" id="EMD-13280"/>
<dbReference type="EMDB" id="EMD-13281"/>
<dbReference type="EMDB" id="EMD-13282"/>
<dbReference type="EMDB" id="EMD-13410"/>
<dbReference type="EMDB" id="EMD-13411"/>
<dbReference type="EMDB" id="EMD-13412"/>
<dbReference type="EMDB" id="EMD-13413"/>
<dbReference type="EMDB" id="EMD-13432"/>
<dbReference type="EMDB" id="EMD-13433"/>
<dbReference type="EMDB" id="EMD-13434"/>
<dbReference type="EMDB" id="EMD-13435"/>
<dbReference type="EMDB" id="EMD-13436"/>
<dbReference type="EMDB" id="EMD-13445"/>
<dbReference type="EMDB" id="EMD-13446"/>
<dbReference type="EMDB" id="EMD-13447"/>
<dbReference type="EMDB" id="EMD-13448"/>
<dbReference type="EMDB" id="EMD-13449"/>
<dbReference type="EMDB" id="EMD-13450"/>
<dbReference type="SMR" id="Q50301"/>
<dbReference type="IntAct" id="Q50301">
    <property type="interactions" value="10"/>
</dbReference>
<dbReference type="STRING" id="272634.MPN_182"/>
<dbReference type="EnsemblBacteria" id="AAB96297">
    <property type="protein sequence ID" value="AAB96297"/>
    <property type="gene ID" value="MPN_182"/>
</dbReference>
<dbReference type="GeneID" id="66609170"/>
<dbReference type="KEGG" id="mpn:MPN_182"/>
<dbReference type="PATRIC" id="fig|272634.6.peg.200"/>
<dbReference type="HOGENOM" id="CLU_065898_2_1_14"/>
<dbReference type="OrthoDB" id="9809045at2"/>
<dbReference type="BioCyc" id="MPNE272634:G1GJ3-295-MONOMER"/>
<dbReference type="Proteomes" id="UP000000808">
    <property type="component" value="Chromosome"/>
</dbReference>
<dbReference type="GO" id="GO:0015935">
    <property type="term" value="C:small ribosomal subunit"/>
    <property type="evidence" value="ECO:0007669"/>
    <property type="project" value="InterPro"/>
</dbReference>
<dbReference type="GO" id="GO:0019843">
    <property type="term" value="F:rRNA binding"/>
    <property type="evidence" value="ECO:0007669"/>
    <property type="project" value="UniProtKB-UniRule"/>
</dbReference>
<dbReference type="GO" id="GO:0003735">
    <property type="term" value="F:structural constituent of ribosome"/>
    <property type="evidence" value="ECO:0007669"/>
    <property type="project" value="InterPro"/>
</dbReference>
<dbReference type="GO" id="GO:0006412">
    <property type="term" value="P:translation"/>
    <property type="evidence" value="ECO:0007669"/>
    <property type="project" value="UniProtKB-UniRule"/>
</dbReference>
<dbReference type="FunFam" id="3.30.230.10:FF:000002">
    <property type="entry name" value="30S ribosomal protein S5"/>
    <property type="match status" value="1"/>
</dbReference>
<dbReference type="Gene3D" id="3.30.160.20">
    <property type="match status" value="1"/>
</dbReference>
<dbReference type="Gene3D" id="3.30.230.10">
    <property type="match status" value="1"/>
</dbReference>
<dbReference type="HAMAP" id="MF_01307_B">
    <property type="entry name" value="Ribosomal_uS5_B"/>
    <property type="match status" value="1"/>
</dbReference>
<dbReference type="InterPro" id="IPR020568">
    <property type="entry name" value="Ribosomal_Su5_D2-typ_SF"/>
</dbReference>
<dbReference type="InterPro" id="IPR000851">
    <property type="entry name" value="Ribosomal_uS5"/>
</dbReference>
<dbReference type="InterPro" id="IPR005712">
    <property type="entry name" value="Ribosomal_uS5_bac-type"/>
</dbReference>
<dbReference type="InterPro" id="IPR005324">
    <property type="entry name" value="Ribosomal_uS5_C"/>
</dbReference>
<dbReference type="InterPro" id="IPR013810">
    <property type="entry name" value="Ribosomal_uS5_N"/>
</dbReference>
<dbReference type="InterPro" id="IPR018192">
    <property type="entry name" value="Ribosomal_uS5_N_CS"/>
</dbReference>
<dbReference type="InterPro" id="IPR014721">
    <property type="entry name" value="Ribsml_uS5_D2-typ_fold_subgr"/>
</dbReference>
<dbReference type="NCBIfam" id="TIGR01021">
    <property type="entry name" value="rpsE_bact"/>
    <property type="match status" value="1"/>
</dbReference>
<dbReference type="PANTHER" id="PTHR48277">
    <property type="entry name" value="MITOCHONDRIAL RIBOSOMAL PROTEIN S5"/>
    <property type="match status" value="1"/>
</dbReference>
<dbReference type="PANTHER" id="PTHR48277:SF1">
    <property type="entry name" value="MITOCHONDRIAL RIBOSOMAL PROTEIN S5"/>
    <property type="match status" value="1"/>
</dbReference>
<dbReference type="Pfam" id="PF00333">
    <property type="entry name" value="Ribosomal_S5"/>
    <property type="match status" value="1"/>
</dbReference>
<dbReference type="Pfam" id="PF03719">
    <property type="entry name" value="Ribosomal_S5_C"/>
    <property type="match status" value="1"/>
</dbReference>
<dbReference type="SUPFAM" id="SSF54768">
    <property type="entry name" value="dsRNA-binding domain-like"/>
    <property type="match status" value="1"/>
</dbReference>
<dbReference type="SUPFAM" id="SSF54211">
    <property type="entry name" value="Ribosomal protein S5 domain 2-like"/>
    <property type="match status" value="1"/>
</dbReference>
<dbReference type="PROSITE" id="PS00585">
    <property type="entry name" value="RIBOSOMAL_S5"/>
    <property type="match status" value="1"/>
</dbReference>
<dbReference type="PROSITE" id="PS50881">
    <property type="entry name" value="S5_DSRBD"/>
    <property type="match status" value="1"/>
</dbReference>
<name>RS5_MYCPN</name>
<comment type="function">
    <text evidence="1">With S4 and S12 plays an important role in translational accuracy.</text>
</comment>
<comment type="function">
    <text evidence="1">Located at the back of the 30S subunit body where it stabilizes the conformation of the head with respect to the body.</text>
</comment>
<comment type="subunit">
    <text evidence="1">Part of the 30S ribosomal subunit. Contacts proteins S4 and S8.</text>
</comment>
<comment type="domain">
    <text>The N-terminal domain interacts with the head of the 30S subunit; the C-terminal domain interacts with the body and contacts protein S4. The interaction surface between S4 and S5 is involved in control of translational fidelity.</text>
</comment>
<comment type="similarity">
    <text evidence="1">Belongs to the universal ribosomal protein uS5 family.</text>
</comment>